<name>PRP17_YEAST</name>
<organism>
    <name type="scientific">Saccharomyces cerevisiae (strain ATCC 204508 / S288c)</name>
    <name type="common">Baker's yeast</name>
    <dbReference type="NCBI Taxonomy" id="559292"/>
    <lineage>
        <taxon>Eukaryota</taxon>
        <taxon>Fungi</taxon>
        <taxon>Dikarya</taxon>
        <taxon>Ascomycota</taxon>
        <taxon>Saccharomycotina</taxon>
        <taxon>Saccharomycetes</taxon>
        <taxon>Saccharomycetales</taxon>
        <taxon>Saccharomycetaceae</taxon>
        <taxon>Saccharomyces</taxon>
    </lineage>
</organism>
<evidence type="ECO:0000256" key="1">
    <source>
        <dbReference type="SAM" id="MobiDB-lite"/>
    </source>
</evidence>
<evidence type="ECO:0000269" key="2">
    <source>
    </source>
</evidence>
<evidence type="ECO:0000269" key="3">
    <source>
    </source>
</evidence>
<evidence type="ECO:0000305" key="4"/>
<evidence type="ECO:0007829" key="5">
    <source>
        <dbReference type="PDB" id="5GMK"/>
    </source>
</evidence>
<evidence type="ECO:0007829" key="6">
    <source>
        <dbReference type="PDB" id="6BK8"/>
    </source>
</evidence>
<evidence type="ECO:0007829" key="7">
    <source>
        <dbReference type="PDB" id="6J6G"/>
    </source>
</evidence>
<evidence type="ECO:0007829" key="8">
    <source>
        <dbReference type="PDB" id="9DTR"/>
    </source>
</evidence>
<comment type="function">
    <text>May function in the second step of pre-mRNA splicing. Regulatory protein involved in replication and mitotic spindle formation and/or maintenance. Required for initiation and completion of S-phase and for initiation and completion of DNA replication. Might be required for the maintenance of microtubules. Essential only at elevated temperatures.</text>
</comment>
<comment type="subunit">
    <text evidence="2">Belongs to the CWC complex (or CEF1-associated complex), a spliceosome sub-complex reminiscent of a late-stage spliceosome composed of the U2, U5 and U6 snRNAs and at least BUD13, BUD31, BRR2, CDC40, CEF1, CLF1, CUS1, CWC2, CWC15, CWC21, CWC22, CWC23, CWC24, CWC25, CWC27, ECM2, HSH155, IST3, ISY1, LEA1, MSL1, NTC20, PRP8, PRP9, PRP11, PRP19, PRP21, PRP22, PRP45, PRP46, SLU7, SMB1, SMD1, SMD2, SMD3, SMX2, SMX3, SNT309, SNU114, SPP2, SYF1, SYF2, RSE1 and YJU2.</text>
</comment>
<comment type="interaction">
    <interactant intactId="EBI-13834">
        <id>P40968</id>
    </interactant>
    <interactant intactId="EBI-493">
        <id>P32523</id>
        <label>PRP19</label>
    </interactant>
    <organismsDiffer>false</organismsDiffer>
    <experiments>8</experiments>
</comment>
<comment type="subcellular location">
    <subcellularLocation>
        <location>Nucleus</location>
    </subcellularLocation>
</comment>
<comment type="miscellaneous">
    <text evidence="3">Present with 1630 molecules/cell in log phase SD medium.</text>
</comment>
<proteinExistence type="evidence at protein level"/>
<feature type="chain" id="PRO_0000051144" description="Pre-mRNA-processing factor 17">
    <location>
        <begin position="1"/>
        <end position="455"/>
    </location>
</feature>
<feature type="repeat" description="WD 1">
    <location>
        <begin position="160"/>
        <end position="200"/>
    </location>
</feature>
<feature type="repeat" description="WD 2">
    <location>
        <begin position="204"/>
        <end position="243"/>
    </location>
</feature>
<feature type="repeat" description="WD 3">
    <location>
        <begin position="291"/>
        <end position="330"/>
    </location>
</feature>
<feature type="repeat" description="WD 4">
    <location>
        <begin position="334"/>
        <end position="373"/>
    </location>
</feature>
<feature type="repeat" description="WD 5">
    <location>
        <begin position="379"/>
        <end position="422"/>
    </location>
</feature>
<feature type="repeat" description="WD 6">
    <location>
        <begin position="424"/>
        <end position="454"/>
    </location>
</feature>
<feature type="region of interest" description="Disordered" evidence="1">
    <location>
        <begin position="1"/>
        <end position="89"/>
    </location>
</feature>
<feature type="compositionally biased region" description="Basic and acidic residues" evidence="1">
    <location>
        <begin position="18"/>
        <end position="35"/>
    </location>
</feature>
<feature type="compositionally biased region" description="Basic residues" evidence="1">
    <location>
        <begin position="44"/>
        <end position="63"/>
    </location>
</feature>
<feature type="sequence conflict" description="In Ref. 1; AAA86875." evidence="4" ref="1">
    <original>A</original>
    <variation>T</variation>
    <location>
        <position position="390"/>
    </location>
</feature>
<feature type="helix" evidence="8">
    <location>
        <begin position="53"/>
        <end position="61"/>
    </location>
</feature>
<feature type="strand" evidence="8">
    <location>
        <begin position="63"/>
        <end position="67"/>
    </location>
</feature>
<feature type="strand" evidence="8">
    <location>
        <begin position="112"/>
        <end position="115"/>
    </location>
</feature>
<feature type="strand" evidence="8">
    <location>
        <begin position="153"/>
        <end position="158"/>
    </location>
</feature>
<feature type="strand" evidence="8">
    <location>
        <begin position="165"/>
        <end position="170"/>
    </location>
</feature>
<feature type="turn" evidence="8">
    <location>
        <begin position="172"/>
        <end position="174"/>
    </location>
</feature>
<feature type="strand" evidence="8">
    <location>
        <begin position="177"/>
        <end position="182"/>
    </location>
</feature>
<feature type="strand" evidence="5">
    <location>
        <begin position="183"/>
        <end position="185"/>
    </location>
</feature>
<feature type="strand" evidence="8">
    <location>
        <begin position="187"/>
        <end position="193"/>
    </location>
</feature>
<feature type="strand" evidence="8">
    <location>
        <begin position="198"/>
        <end position="203"/>
    </location>
</feature>
<feature type="strand" evidence="8">
    <location>
        <begin position="209"/>
        <end position="214"/>
    </location>
</feature>
<feature type="strand" evidence="8">
    <location>
        <begin position="218"/>
        <end position="225"/>
    </location>
</feature>
<feature type="turn" evidence="8">
    <location>
        <begin position="226"/>
        <end position="228"/>
    </location>
</feature>
<feature type="strand" evidence="8">
    <location>
        <begin position="229"/>
        <end position="234"/>
    </location>
</feature>
<feature type="turn" evidence="8">
    <location>
        <begin position="235"/>
        <end position="237"/>
    </location>
</feature>
<feature type="strand" evidence="8">
    <location>
        <begin position="240"/>
        <end position="245"/>
    </location>
</feature>
<feature type="strand" evidence="8">
    <location>
        <begin position="250"/>
        <end position="255"/>
    </location>
</feature>
<feature type="turn" evidence="7">
    <location>
        <begin position="258"/>
        <end position="261"/>
    </location>
</feature>
<feature type="strand" evidence="8">
    <location>
        <begin position="262"/>
        <end position="267"/>
    </location>
</feature>
<feature type="strand" evidence="8">
    <location>
        <begin position="272"/>
        <end position="276"/>
    </location>
</feature>
<feature type="helix" evidence="8">
    <location>
        <begin position="281"/>
        <end position="284"/>
    </location>
</feature>
<feature type="strand" evidence="8">
    <location>
        <begin position="285"/>
        <end position="289"/>
    </location>
</feature>
<feature type="strand" evidence="8">
    <location>
        <begin position="296"/>
        <end position="301"/>
    </location>
</feature>
<feature type="strand" evidence="8">
    <location>
        <begin position="305"/>
        <end position="312"/>
    </location>
</feature>
<feature type="turn" evidence="6">
    <location>
        <begin position="313"/>
        <end position="315"/>
    </location>
</feature>
<feature type="strand" evidence="8">
    <location>
        <begin position="317"/>
        <end position="321"/>
    </location>
</feature>
<feature type="strand" evidence="8">
    <location>
        <begin position="325"/>
        <end position="331"/>
    </location>
</feature>
<feature type="strand" evidence="8">
    <location>
        <begin position="340"/>
        <end position="344"/>
    </location>
</feature>
<feature type="strand" evidence="8">
    <location>
        <begin position="348"/>
        <end position="355"/>
    </location>
</feature>
<feature type="turn" evidence="8">
    <location>
        <begin position="356"/>
        <end position="358"/>
    </location>
</feature>
<feature type="strand" evidence="8">
    <location>
        <begin position="359"/>
        <end position="366"/>
    </location>
</feature>
<feature type="strand" evidence="8">
    <location>
        <begin position="377"/>
        <end position="379"/>
    </location>
</feature>
<feature type="strand" evidence="7">
    <location>
        <begin position="381"/>
        <end position="383"/>
    </location>
</feature>
<feature type="strand" evidence="8">
    <location>
        <begin position="389"/>
        <end position="391"/>
    </location>
</feature>
<feature type="strand" evidence="8">
    <location>
        <begin position="395"/>
        <end position="402"/>
    </location>
</feature>
<feature type="strand" evidence="8">
    <location>
        <begin position="405"/>
        <end position="411"/>
    </location>
</feature>
<feature type="turn" evidence="8">
    <location>
        <begin position="412"/>
        <end position="414"/>
    </location>
</feature>
<feature type="strand" evidence="8">
    <location>
        <begin position="417"/>
        <end position="422"/>
    </location>
</feature>
<feature type="strand" evidence="6">
    <location>
        <begin position="424"/>
        <end position="427"/>
    </location>
</feature>
<feature type="strand" evidence="8">
    <location>
        <begin position="431"/>
        <end position="434"/>
    </location>
</feature>
<feature type="strand" evidence="8">
    <location>
        <begin position="436"/>
        <end position="440"/>
    </location>
</feature>
<feature type="strand" evidence="8">
    <location>
        <begin position="442"/>
        <end position="445"/>
    </location>
</feature>
<feature type="turn" evidence="5">
    <location>
        <begin position="447"/>
        <end position="449"/>
    </location>
</feature>
<feature type="strand" evidence="8">
    <location>
        <begin position="451"/>
        <end position="455"/>
    </location>
</feature>
<keyword id="KW-0002">3D-structure</keyword>
<keyword id="KW-0507">mRNA processing</keyword>
<keyword id="KW-0508">mRNA splicing</keyword>
<keyword id="KW-0539">Nucleus</keyword>
<keyword id="KW-1185">Reference proteome</keyword>
<keyword id="KW-0677">Repeat</keyword>
<keyword id="KW-0747">Spliceosome</keyword>
<keyword id="KW-0853">WD repeat</keyword>
<protein>
    <recommendedName>
        <fullName>Pre-mRNA-processing factor 17</fullName>
    </recommendedName>
    <alternativeName>
        <fullName>Cell division control protein 40</fullName>
    </alternativeName>
</protein>
<dbReference type="EMBL" id="U17018">
    <property type="protein sequence ID" value="AAA86875.1"/>
    <property type="molecule type" value="Genomic_DNA"/>
</dbReference>
<dbReference type="EMBL" id="U28373">
    <property type="protein sequence ID" value="AAB64800.1"/>
    <property type="molecule type" value="Genomic_DNA"/>
</dbReference>
<dbReference type="EMBL" id="BK006938">
    <property type="protein sequence ID" value="DAA12203.1"/>
    <property type="molecule type" value="Genomic_DNA"/>
</dbReference>
<dbReference type="PIR" id="S61159">
    <property type="entry name" value="S61159"/>
</dbReference>
<dbReference type="RefSeq" id="NP_010652.3">
    <property type="nucleotide sequence ID" value="NM_001180672.3"/>
</dbReference>
<dbReference type="PDB" id="5GM6">
    <property type="method" value="EM"/>
    <property type="resolution" value="3.50 A"/>
    <property type="chains" value="n=1-455"/>
</dbReference>
<dbReference type="PDB" id="5GMK">
    <property type="method" value="EM"/>
    <property type="resolution" value="3.40 A"/>
    <property type="chains" value="n=1-455"/>
</dbReference>
<dbReference type="PDB" id="5MPS">
    <property type="method" value="EM"/>
    <property type="resolution" value="3.85 A"/>
    <property type="chains" value="o=1-455"/>
</dbReference>
<dbReference type="PDB" id="5MQ0">
    <property type="method" value="EM"/>
    <property type="resolution" value="4.17 A"/>
    <property type="chains" value="o=1-455"/>
</dbReference>
<dbReference type="PDB" id="5WSG">
    <property type="method" value="EM"/>
    <property type="resolution" value="4.00 A"/>
    <property type="chains" value="n=1-455"/>
</dbReference>
<dbReference type="PDB" id="5Y88">
    <property type="method" value="EM"/>
    <property type="resolution" value="3.70 A"/>
    <property type="chains" value="S=1-455"/>
</dbReference>
<dbReference type="PDB" id="5YLZ">
    <property type="method" value="EM"/>
    <property type="resolution" value="3.60 A"/>
    <property type="chains" value="T=1-455"/>
</dbReference>
<dbReference type="PDB" id="6BK8">
    <property type="method" value="EM"/>
    <property type="resolution" value="3.30 A"/>
    <property type="chains" value="M=1-455"/>
</dbReference>
<dbReference type="PDB" id="6EXN">
    <property type="method" value="EM"/>
    <property type="resolution" value="3.70 A"/>
    <property type="chains" value="o=1-455"/>
</dbReference>
<dbReference type="PDB" id="6J6G">
    <property type="method" value="EM"/>
    <property type="resolution" value="3.20 A"/>
    <property type="chains" value="n=1-455"/>
</dbReference>
<dbReference type="PDB" id="6J6H">
    <property type="method" value="EM"/>
    <property type="resolution" value="3.60 A"/>
    <property type="chains" value="n=1-455"/>
</dbReference>
<dbReference type="PDB" id="6J6N">
    <property type="method" value="EM"/>
    <property type="resolution" value="3.86 A"/>
    <property type="chains" value="n=1-455"/>
</dbReference>
<dbReference type="PDB" id="6J6Q">
    <property type="method" value="EM"/>
    <property type="resolution" value="3.70 A"/>
    <property type="chains" value="n=1-455"/>
</dbReference>
<dbReference type="PDB" id="9DTR">
    <property type="method" value="EM"/>
    <property type="resolution" value="2.31 A"/>
    <property type="chains" value="o=1-455"/>
</dbReference>
<dbReference type="PDBsum" id="5GM6"/>
<dbReference type="PDBsum" id="5GMK"/>
<dbReference type="PDBsum" id="5MPS"/>
<dbReference type="PDBsum" id="5MQ0"/>
<dbReference type="PDBsum" id="5WSG"/>
<dbReference type="PDBsum" id="5Y88"/>
<dbReference type="PDBsum" id="5YLZ"/>
<dbReference type="PDBsum" id="6BK8"/>
<dbReference type="PDBsum" id="6EXN"/>
<dbReference type="PDBsum" id="6J6G"/>
<dbReference type="PDBsum" id="6J6H"/>
<dbReference type="PDBsum" id="6J6N"/>
<dbReference type="PDBsum" id="6J6Q"/>
<dbReference type="PDBsum" id="9DTR"/>
<dbReference type="EMDB" id="EMD-0686"/>
<dbReference type="EMDB" id="EMD-0687"/>
<dbReference type="EMDB" id="EMD-0691"/>
<dbReference type="EMDB" id="EMD-0692"/>
<dbReference type="EMDB" id="EMD-3539"/>
<dbReference type="EMDB" id="EMD-3541"/>
<dbReference type="EMDB" id="EMD-47157"/>
<dbReference type="EMDB" id="EMD-6817"/>
<dbReference type="EMDB" id="EMD-6839"/>
<dbReference type="EMDB" id="EMD-7109"/>
<dbReference type="EMDB" id="EMD-9524"/>
<dbReference type="EMDB" id="EMD-9525"/>
<dbReference type="SMR" id="P40968"/>
<dbReference type="BioGRID" id="32421">
    <property type="interactions" value="189"/>
</dbReference>
<dbReference type="ComplexPortal" id="CPX-1651">
    <property type="entry name" value="PRP19-associated complex"/>
</dbReference>
<dbReference type="DIP" id="DIP-1111N"/>
<dbReference type="FunCoup" id="P40968">
    <property type="interactions" value="1004"/>
</dbReference>
<dbReference type="IntAct" id="P40968">
    <property type="interactions" value="46"/>
</dbReference>
<dbReference type="MINT" id="P40968"/>
<dbReference type="STRING" id="4932.YDR364C"/>
<dbReference type="iPTMnet" id="P40968"/>
<dbReference type="PaxDb" id="4932-YDR364C"/>
<dbReference type="PeptideAtlas" id="P40968"/>
<dbReference type="EnsemblFungi" id="YDR364C_mRNA">
    <property type="protein sequence ID" value="YDR364C"/>
    <property type="gene ID" value="YDR364C"/>
</dbReference>
<dbReference type="GeneID" id="851968"/>
<dbReference type="KEGG" id="sce:YDR364C"/>
<dbReference type="AGR" id="SGD:S000002772"/>
<dbReference type="SGD" id="S000002772">
    <property type="gene designation" value="CDC40"/>
</dbReference>
<dbReference type="VEuPathDB" id="FungiDB:YDR364C"/>
<dbReference type="eggNOG" id="KOG0282">
    <property type="taxonomic scope" value="Eukaryota"/>
</dbReference>
<dbReference type="GeneTree" id="ENSGT00530000063583"/>
<dbReference type="HOGENOM" id="CLU_022571_0_0_1"/>
<dbReference type="InParanoid" id="P40968"/>
<dbReference type="OMA" id="VQVYDHH"/>
<dbReference type="OrthoDB" id="10257301at2759"/>
<dbReference type="BioCyc" id="YEAST:G3O-29914-MONOMER"/>
<dbReference type="BioGRID-ORCS" id="851968">
    <property type="hits" value="1 hit in 10 CRISPR screens"/>
</dbReference>
<dbReference type="PRO" id="PR:P40968"/>
<dbReference type="Proteomes" id="UP000002311">
    <property type="component" value="Chromosome IV"/>
</dbReference>
<dbReference type="RNAct" id="P40968">
    <property type="molecule type" value="protein"/>
</dbReference>
<dbReference type="GO" id="GO:0071013">
    <property type="term" value="C:catalytic step 2 spliceosome"/>
    <property type="evidence" value="ECO:0000318"/>
    <property type="project" value="GO_Central"/>
</dbReference>
<dbReference type="GO" id="GO:0034399">
    <property type="term" value="C:nuclear periphery"/>
    <property type="evidence" value="ECO:0000314"/>
    <property type="project" value="SGD"/>
</dbReference>
<dbReference type="GO" id="GO:0000974">
    <property type="term" value="C:Prp19 complex"/>
    <property type="evidence" value="ECO:0000353"/>
    <property type="project" value="ComplexPortal"/>
</dbReference>
<dbReference type="GO" id="GO:0005681">
    <property type="term" value="C:spliceosomal complex"/>
    <property type="evidence" value="ECO:0000314"/>
    <property type="project" value="SGD"/>
</dbReference>
<dbReference type="GO" id="GO:0003729">
    <property type="term" value="F:mRNA binding"/>
    <property type="evidence" value="ECO:0000318"/>
    <property type="project" value="GO_Central"/>
</dbReference>
<dbReference type="GO" id="GO:0000350">
    <property type="term" value="P:generation of catalytic spliceosome for second transesterification step"/>
    <property type="evidence" value="ECO:0000315"/>
    <property type="project" value="SGD"/>
</dbReference>
<dbReference type="GO" id="GO:0000389">
    <property type="term" value="P:mRNA 3'-splice site recognition"/>
    <property type="evidence" value="ECO:0000316"/>
    <property type="project" value="SGD"/>
</dbReference>
<dbReference type="GO" id="GO:0000348">
    <property type="term" value="P:mRNA branch site recognition"/>
    <property type="evidence" value="ECO:0000316"/>
    <property type="project" value="SGD"/>
</dbReference>
<dbReference type="GO" id="GO:0000398">
    <property type="term" value="P:mRNA splicing, via spliceosome"/>
    <property type="evidence" value="ECO:0000318"/>
    <property type="project" value="GO_Central"/>
</dbReference>
<dbReference type="CDD" id="cd00200">
    <property type="entry name" value="WD40"/>
    <property type="match status" value="1"/>
</dbReference>
<dbReference type="FunFam" id="2.130.10.10:FF:000034">
    <property type="entry name" value="Pre-mRNA-processing factor 17, putative"/>
    <property type="match status" value="1"/>
</dbReference>
<dbReference type="Gene3D" id="2.130.10.10">
    <property type="entry name" value="YVTN repeat-like/Quinoprotein amine dehydrogenase"/>
    <property type="match status" value="1"/>
</dbReference>
<dbReference type="InterPro" id="IPR020472">
    <property type="entry name" value="G-protein_beta_WD-40_rep"/>
</dbReference>
<dbReference type="InterPro" id="IPR032847">
    <property type="entry name" value="PRPF17"/>
</dbReference>
<dbReference type="InterPro" id="IPR015943">
    <property type="entry name" value="WD40/YVTN_repeat-like_dom_sf"/>
</dbReference>
<dbReference type="InterPro" id="IPR036322">
    <property type="entry name" value="WD40_repeat_dom_sf"/>
</dbReference>
<dbReference type="InterPro" id="IPR001680">
    <property type="entry name" value="WD40_rpt"/>
</dbReference>
<dbReference type="PANTHER" id="PTHR43979">
    <property type="entry name" value="PRE-MRNA-PROCESSING FACTOR 17"/>
    <property type="match status" value="1"/>
</dbReference>
<dbReference type="PANTHER" id="PTHR43979:SF1">
    <property type="entry name" value="PRE-MRNA-PROCESSING FACTOR 17"/>
    <property type="match status" value="1"/>
</dbReference>
<dbReference type="Pfam" id="PF00400">
    <property type="entry name" value="WD40"/>
    <property type="match status" value="4"/>
</dbReference>
<dbReference type="PRINTS" id="PR00320">
    <property type="entry name" value="GPROTEINBRPT"/>
</dbReference>
<dbReference type="SMART" id="SM00320">
    <property type="entry name" value="WD40"/>
    <property type="match status" value="5"/>
</dbReference>
<dbReference type="SUPFAM" id="SSF50978">
    <property type="entry name" value="WD40 repeat-like"/>
    <property type="match status" value="1"/>
</dbReference>
<dbReference type="PROSITE" id="PS00678">
    <property type="entry name" value="WD_REPEATS_1"/>
    <property type="match status" value="1"/>
</dbReference>
<dbReference type="PROSITE" id="PS50082">
    <property type="entry name" value="WD_REPEATS_2"/>
    <property type="match status" value="3"/>
</dbReference>
<dbReference type="PROSITE" id="PS50294">
    <property type="entry name" value="WD_REPEATS_REGION"/>
    <property type="match status" value="1"/>
</dbReference>
<sequence>MGLVDGYDTSSDSDLNFDEGKSVHEKKNGNLHEDTSYEPSSNNIHKRKSHFTKSELKRRRKTRKGDGPWGSWSSSDDETSQASETQKEDQDIFVHALAEDNLDSEQIEVEEVSHFYGKSEKDYQGRGYLYPPNDVDVDLREERISFRCYLPKKVIRNYPGHPEGTTALKFLPKTGHLILSGGNDHTIKIWDFYHDYECLRDFQGHNKPIKALRFTEDCQSFLSSSFDRSVKIWDTETGKVKTRLHLNSTPADVESRPTNPHEFIVGLSNSKILHYDDRVSENQGLVQTYDHHLSSILALKYFPDGSKFISSSEDKTVRIWENQINVPIKQISDTAQHSMPFLNVHPSQNYFCAQSMDNRIYSFSLKPKYKRHPKKIFKGHSSAGYGISLAFSGDGRYICSGDSKSRLFTWDWNTSRLLNNIKIPGNKPITQVDWHPQETSKVICSGAAGKIYVCD</sequence>
<gene>
    <name type="primary">CDC40</name>
    <name type="synonym">PRP17</name>
    <name type="synonym">SLU4</name>
    <name type="synonym">XRS2</name>
    <name type="ordered locus">YDR364C</name>
    <name type="ORF">D9481.11</name>
</gene>
<accession>P40968</accession>
<accession>D6VSZ3</accession>
<accession>Q06341</accession>
<reference key="1">
    <citation type="journal article" date="1995" name="Mol. Gen. Genet.">
        <title>The role of Saccharomyces cerevisiae Cdc40p in DNA replication and mitotic spindle formation and/or maintenance.</title>
        <authorList>
            <person name="Vaisman N."/>
            <person name="Tsouladze A."/>
            <person name="Robzyk K."/>
            <person name="Ben-Yehuda S."/>
            <person name="Kupiec M."/>
            <person name="Kassir Y."/>
        </authorList>
    </citation>
    <scope>NUCLEOTIDE SEQUENCE [GENOMIC DNA]</scope>
</reference>
<reference key="2">
    <citation type="journal article" date="1997" name="Nature">
        <title>The nucleotide sequence of Saccharomyces cerevisiae chromosome IV.</title>
        <authorList>
            <person name="Jacq C."/>
            <person name="Alt-Moerbe J."/>
            <person name="Andre B."/>
            <person name="Arnold W."/>
            <person name="Bahr A."/>
            <person name="Ballesta J.P.G."/>
            <person name="Bargues M."/>
            <person name="Baron L."/>
            <person name="Becker A."/>
            <person name="Biteau N."/>
            <person name="Bloecker H."/>
            <person name="Blugeon C."/>
            <person name="Boskovic J."/>
            <person name="Brandt P."/>
            <person name="Brueckner M."/>
            <person name="Buitrago M.J."/>
            <person name="Coster F."/>
            <person name="Delaveau T."/>
            <person name="del Rey F."/>
            <person name="Dujon B."/>
            <person name="Eide L.G."/>
            <person name="Garcia-Cantalejo J.M."/>
            <person name="Goffeau A."/>
            <person name="Gomez-Peris A."/>
            <person name="Granotier C."/>
            <person name="Hanemann V."/>
            <person name="Hankeln T."/>
            <person name="Hoheisel J.D."/>
            <person name="Jaeger W."/>
            <person name="Jimenez A."/>
            <person name="Jonniaux J.-L."/>
            <person name="Kraemer C."/>
            <person name="Kuester H."/>
            <person name="Laamanen P."/>
            <person name="Legros Y."/>
            <person name="Louis E.J."/>
            <person name="Moeller-Rieker S."/>
            <person name="Monnet A."/>
            <person name="Moro M."/>
            <person name="Mueller-Auer S."/>
            <person name="Nussbaumer B."/>
            <person name="Paricio N."/>
            <person name="Paulin L."/>
            <person name="Perea J."/>
            <person name="Perez-Alonso M."/>
            <person name="Perez-Ortin J.E."/>
            <person name="Pohl T.M."/>
            <person name="Prydz H."/>
            <person name="Purnelle B."/>
            <person name="Rasmussen S.W."/>
            <person name="Remacha M.A."/>
            <person name="Revuelta J.L."/>
            <person name="Rieger M."/>
            <person name="Salom D."/>
            <person name="Saluz H.P."/>
            <person name="Saiz J.E."/>
            <person name="Saren A.-M."/>
            <person name="Schaefer M."/>
            <person name="Scharfe M."/>
            <person name="Schmidt E.R."/>
            <person name="Schneider C."/>
            <person name="Scholler P."/>
            <person name="Schwarz S."/>
            <person name="Soler-Mira A."/>
            <person name="Urrestarazu L.A."/>
            <person name="Verhasselt P."/>
            <person name="Vissers S."/>
            <person name="Voet M."/>
            <person name="Volckaert G."/>
            <person name="Wagner G."/>
            <person name="Wambutt R."/>
            <person name="Wedler E."/>
            <person name="Wedler H."/>
            <person name="Woelfl S."/>
            <person name="Harris D.E."/>
            <person name="Bowman S."/>
            <person name="Brown D."/>
            <person name="Churcher C.M."/>
            <person name="Connor R."/>
            <person name="Dedman K."/>
            <person name="Gentles S."/>
            <person name="Hamlin N."/>
            <person name="Hunt S."/>
            <person name="Jones L."/>
            <person name="McDonald S."/>
            <person name="Murphy L.D."/>
            <person name="Niblett D."/>
            <person name="Odell C."/>
            <person name="Oliver K."/>
            <person name="Rajandream M.A."/>
            <person name="Richards C."/>
            <person name="Shore L."/>
            <person name="Walsh S.V."/>
            <person name="Barrell B.G."/>
            <person name="Dietrich F.S."/>
            <person name="Mulligan J.T."/>
            <person name="Allen E."/>
            <person name="Araujo R."/>
            <person name="Aviles E."/>
            <person name="Berno A."/>
            <person name="Carpenter J."/>
            <person name="Chen E."/>
            <person name="Cherry J.M."/>
            <person name="Chung E."/>
            <person name="Duncan M."/>
            <person name="Hunicke-Smith S."/>
            <person name="Hyman R.W."/>
            <person name="Komp C."/>
            <person name="Lashkari D."/>
            <person name="Lew H."/>
            <person name="Lin D."/>
            <person name="Mosedale D."/>
            <person name="Nakahara K."/>
            <person name="Namath A."/>
            <person name="Oefner P."/>
            <person name="Oh C."/>
            <person name="Petel F.X."/>
            <person name="Roberts D."/>
            <person name="Schramm S."/>
            <person name="Schroeder M."/>
            <person name="Shogren T."/>
            <person name="Shroff N."/>
            <person name="Winant A."/>
            <person name="Yelton M.A."/>
            <person name="Botstein D."/>
            <person name="Davis R.W."/>
            <person name="Johnston M."/>
            <person name="Andrews S."/>
            <person name="Brinkman R."/>
            <person name="Cooper J."/>
            <person name="Ding H."/>
            <person name="Du Z."/>
            <person name="Favello A."/>
            <person name="Fulton L."/>
            <person name="Gattung S."/>
            <person name="Greco T."/>
            <person name="Hallsworth K."/>
            <person name="Hawkins J."/>
            <person name="Hillier L.W."/>
            <person name="Jier M."/>
            <person name="Johnson D."/>
            <person name="Johnston L."/>
            <person name="Kirsten J."/>
            <person name="Kucaba T."/>
            <person name="Langston Y."/>
            <person name="Latreille P."/>
            <person name="Le T."/>
            <person name="Mardis E."/>
            <person name="Menezes S."/>
            <person name="Miller N."/>
            <person name="Nhan M."/>
            <person name="Pauley A."/>
            <person name="Peluso D."/>
            <person name="Rifkin L."/>
            <person name="Riles L."/>
            <person name="Taich A."/>
            <person name="Trevaskis E."/>
            <person name="Vignati D."/>
            <person name="Wilcox L."/>
            <person name="Wohldman P."/>
            <person name="Vaudin M."/>
            <person name="Wilson R."/>
            <person name="Waterston R."/>
            <person name="Albermann K."/>
            <person name="Hani J."/>
            <person name="Heumann K."/>
            <person name="Kleine K."/>
            <person name="Mewes H.-W."/>
            <person name="Zollner A."/>
            <person name="Zaccaria P."/>
        </authorList>
    </citation>
    <scope>NUCLEOTIDE SEQUENCE [LARGE SCALE GENOMIC DNA]</scope>
    <source>
        <strain>ATCC 204508 / S288c</strain>
    </source>
</reference>
<reference key="3">
    <citation type="journal article" date="2014" name="G3 (Bethesda)">
        <title>The reference genome sequence of Saccharomyces cerevisiae: Then and now.</title>
        <authorList>
            <person name="Engel S.R."/>
            <person name="Dietrich F.S."/>
            <person name="Fisk D.G."/>
            <person name="Binkley G."/>
            <person name="Balakrishnan R."/>
            <person name="Costanzo M.C."/>
            <person name="Dwight S.S."/>
            <person name="Hitz B.C."/>
            <person name="Karra K."/>
            <person name="Nash R.S."/>
            <person name="Weng S."/>
            <person name="Wong E.D."/>
            <person name="Lloyd P."/>
            <person name="Skrzypek M.S."/>
            <person name="Miyasato S.R."/>
            <person name="Simison M."/>
            <person name="Cherry J.M."/>
        </authorList>
    </citation>
    <scope>GENOME REANNOTATION</scope>
    <source>
        <strain>ATCC 204508 / S288c</strain>
    </source>
</reference>
<reference key="4">
    <citation type="journal article" date="2002" name="Mol. Cell. Biol.">
        <title>Proteomics analysis reveals stable multiprotein complexes in both fission and budding yeasts containing Myb-related Cdc5p/Cef1p, novel pre-mRNA splicing factors, and snRNAs.</title>
        <authorList>
            <person name="Ohi M.D."/>
            <person name="Link A.J."/>
            <person name="Ren L."/>
            <person name="Jennings J.L."/>
            <person name="McDonald W.H."/>
            <person name="Gould K.L."/>
        </authorList>
    </citation>
    <scope>IDENTIFICATION IN THE CWC COMPLEX</scope>
    <scope>IDENTIFICATION BY MASS SPECTROMETRY</scope>
</reference>
<reference key="5">
    <citation type="journal article" date="2003" name="Mol. Cell">
        <title>Assigning function to yeast proteins by integration of technologies.</title>
        <authorList>
            <person name="Hazbun T.R."/>
            <person name="Malmstroem L."/>
            <person name="Anderson S."/>
            <person name="Graczyk B.J."/>
            <person name="Fox B."/>
            <person name="Riffle M."/>
            <person name="Sundin B.A."/>
            <person name="Aranda J.D."/>
            <person name="McDonald W.H."/>
            <person name="Chiu C.-H."/>
            <person name="Snydsman B.E."/>
            <person name="Bradley P."/>
            <person name="Muller E.G.D."/>
            <person name="Fields S."/>
            <person name="Baker D."/>
            <person name="Yates J.R. III"/>
            <person name="Davis T.N."/>
        </authorList>
    </citation>
    <scope>IDENTIFICATION BY MASS SPECTROMETRY</scope>
</reference>
<reference key="6">
    <citation type="journal article" date="2003" name="Nature">
        <title>Global analysis of protein expression in yeast.</title>
        <authorList>
            <person name="Ghaemmaghami S."/>
            <person name="Huh W.-K."/>
            <person name="Bower K."/>
            <person name="Howson R.W."/>
            <person name="Belle A."/>
            <person name="Dephoure N."/>
            <person name="O'Shea E.K."/>
            <person name="Weissman J.S."/>
        </authorList>
    </citation>
    <scope>LEVEL OF PROTEIN EXPRESSION [LARGE SCALE ANALYSIS]</scope>
</reference>